<comment type="function">
    <text evidence="1">Catalyzes a reversible aldol reaction between acetaldehyde and D-glyceraldehyde 3-phosphate to generate 2-deoxy-D-ribose 5-phosphate.</text>
</comment>
<comment type="catalytic activity">
    <reaction evidence="1">
        <text>2-deoxy-D-ribose 5-phosphate = D-glyceraldehyde 3-phosphate + acetaldehyde</text>
        <dbReference type="Rhea" id="RHEA:12821"/>
        <dbReference type="ChEBI" id="CHEBI:15343"/>
        <dbReference type="ChEBI" id="CHEBI:59776"/>
        <dbReference type="ChEBI" id="CHEBI:62877"/>
        <dbReference type="EC" id="4.1.2.4"/>
    </reaction>
</comment>
<comment type="pathway">
    <text evidence="1">Carbohydrate degradation; 2-deoxy-D-ribose 1-phosphate degradation; D-glyceraldehyde 3-phosphate and acetaldehyde from 2-deoxy-alpha-D-ribose 1-phosphate: step 2/2.</text>
</comment>
<comment type="subcellular location">
    <subcellularLocation>
        <location evidence="1">Cytoplasm</location>
    </subcellularLocation>
</comment>
<comment type="similarity">
    <text evidence="1">Belongs to the DeoC/FbaB aldolase family. DeoC type 1 subfamily.</text>
</comment>
<dbReference type="EC" id="4.1.2.4" evidence="1"/>
<dbReference type="EMBL" id="CP000647">
    <property type="protein sequence ID" value="ABR77133.1"/>
    <property type="molecule type" value="Genomic_DNA"/>
</dbReference>
<dbReference type="RefSeq" id="WP_004143406.1">
    <property type="nucleotide sequence ID" value="NC_009648.1"/>
</dbReference>
<dbReference type="SMR" id="A6T962"/>
<dbReference type="STRING" id="272620.KPN_01702"/>
<dbReference type="PaxDb" id="272620-KPN_01702"/>
<dbReference type="EnsemblBacteria" id="ABR77133">
    <property type="protein sequence ID" value="ABR77133"/>
    <property type="gene ID" value="KPN_01702"/>
</dbReference>
<dbReference type="KEGG" id="kpn:KPN_01702"/>
<dbReference type="HOGENOM" id="CLU_053595_0_2_6"/>
<dbReference type="UniPathway" id="UPA00002">
    <property type="reaction ID" value="UER00468"/>
</dbReference>
<dbReference type="Proteomes" id="UP000000265">
    <property type="component" value="Chromosome"/>
</dbReference>
<dbReference type="GO" id="GO:0005737">
    <property type="term" value="C:cytoplasm"/>
    <property type="evidence" value="ECO:0007669"/>
    <property type="project" value="UniProtKB-SubCell"/>
</dbReference>
<dbReference type="GO" id="GO:0004139">
    <property type="term" value="F:deoxyribose-phosphate aldolase activity"/>
    <property type="evidence" value="ECO:0007669"/>
    <property type="project" value="UniProtKB-UniRule"/>
</dbReference>
<dbReference type="GO" id="GO:0006018">
    <property type="term" value="P:2-deoxyribose 1-phosphate catabolic process"/>
    <property type="evidence" value="ECO:0007669"/>
    <property type="project" value="UniProtKB-UniRule"/>
</dbReference>
<dbReference type="GO" id="GO:0016052">
    <property type="term" value="P:carbohydrate catabolic process"/>
    <property type="evidence" value="ECO:0007669"/>
    <property type="project" value="TreeGrafter"/>
</dbReference>
<dbReference type="GO" id="GO:0009264">
    <property type="term" value="P:deoxyribonucleotide catabolic process"/>
    <property type="evidence" value="ECO:0007669"/>
    <property type="project" value="InterPro"/>
</dbReference>
<dbReference type="CDD" id="cd00959">
    <property type="entry name" value="DeoC"/>
    <property type="match status" value="1"/>
</dbReference>
<dbReference type="Gene3D" id="3.20.20.70">
    <property type="entry name" value="Aldolase class I"/>
    <property type="match status" value="1"/>
</dbReference>
<dbReference type="HAMAP" id="MF_00114">
    <property type="entry name" value="DeoC_type1"/>
    <property type="match status" value="1"/>
</dbReference>
<dbReference type="InterPro" id="IPR013785">
    <property type="entry name" value="Aldolase_TIM"/>
</dbReference>
<dbReference type="InterPro" id="IPR011343">
    <property type="entry name" value="DeoC"/>
</dbReference>
<dbReference type="InterPro" id="IPR002915">
    <property type="entry name" value="DeoC/FbaB/LacD_aldolase"/>
</dbReference>
<dbReference type="InterPro" id="IPR028581">
    <property type="entry name" value="DeoC_typeI"/>
</dbReference>
<dbReference type="NCBIfam" id="TIGR00126">
    <property type="entry name" value="deoC"/>
    <property type="match status" value="1"/>
</dbReference>
<dbReference type="PANTHER" id="PTHR10889">
    <property type="entry name" value="DEOXYRIBOSE-PHOSPHATE ALDOLASE"/>
    <property type="match status" value="1"/>
</dbReference>
<dbReference type="PANTHER" id="PTHR10889:SF1">
    <property type="entry name" value="DEOXYRIBOSE-PHOSPHATE ALDOLASE"/>
    <property type="match status" value="1"/>
</dbReference>
<dbReference type="Pfam" id="PF01791">
    <property type="entry name" value="DeoC"/>
    <property type="match status" value="1"/>
</dbReference>
<dbReference type="PIRSF" id="PIRSF001357">
    <property type="entry name" value="DeoC"/>
    <property type="match status" value="1"/>
</dbReference>
<dbReference type="SMART" id="SM01133">
    <property type="entry name" value="DeoC"/>
    <property type="match status" value="1"/>
</dbReference>
<dbReference type="SUPFAM" id="SSF51569">
    <property type="entry name" value="Aldolase"/>
    <property type="match status" value="1"/>
</dbReference>
<evidence type="ECO:0000255" key="1">
    <source>
        <dbReference type="HAMAP-Rule" id="MF_00114"/>
    </source>
</evidence>
<proteinExistence type="inferred from homology"/>
<protein>
    <recommendedName>
        <fullName evidence="1">Deoxyribose-phosphate aldolase</fullName>
        <shortName evidence="1">DERA</shortName>
        <ecNumber evidence="1">4.1.2.4</ecNumber>
    </recommendedName>
    <alternativeName>
        <fullName evidence="1">2-deoxy-D-ribose 5-phosphate aldolase</fullName>
    </alternativeName>
    <alternativeName>
        <fullName evidence="1">Phosphodeoxyriboaldolase</fullName>
        <shortName evidence="1">Deoxyriboaldolase</shortName>
    </alternativeName>
</protein>
<reference key="1">
    <citation type="submission" date="2006-09" db="EMBL/GenBank/DDBJ databases">
        <authorList>
            <consortium name="The Klebsiella pneumonia Genome Sequencing Project"/>
            <person name="McClelland M."/>
            <person name="Sanderson E.K."/>
            <person name="Spieth J."/>
            <person name="Clifton W.S."/>
            <person name="Latreille P."/>
            <person name="Sabo A."/>
            <person name="Pepin K."/>
            <person name="Bhonagiri V."/>
            <person name="Porwollik S."/>
            <person name="Ali J."/>
            <person name="Wilson R.K."/>
        </authorList>
    </citation>
    <scope>NUCLEOTIDE SEQUENCE [LARGE SCALE GENOMIC DNA]</scope>
    <source>
        <strain>ATCC 700721 / MGH 78578</strain>
    </source>
</reference>
<keyword id="KW-0963">Cytoplasm</keyword>
<keyword id="KW-0456">Lyase</keyword>
<keyword id="KW-0704">Schiff base</keyword>
<sequence length="249" mass="27313">MKAIKNKGQDKTMNETTHRFARLVDLSAVQATSTEADVRACAELAARYNIISVHVLPCWTRFLSTLLPQQGTGEVMIGGPVGFPGGGHTTDTKVQEVRQLIADGAREVDMVVNIGKVLSGDYDYVREDLRRVVEAAAPVPAKVILETHYLNEEQIRRVCEIAVEVGMKWVKTSTGWAPTGATVEKVRIIADQLKGRIDIKGAGGIRDLATVRALYQLGVRRFGMSHGAVTKVLAELEQHPERFPELNAD</sequence>
<feature type="chain" id="PRO_1000015320" description="Deoxyribose-phosphate aldolase">
    <location>
        <begin position="1"/>
        <end position="249"/>
    </location>
</feature>
<feature type="active site" description="Proton donor/acceptor" evidence="1">
    <location>
        <position position="109"/>
    </location>
</feature>
<feature type="active site" description="Schiff-base intermediate with acetaldehyde" evidence="1">
    <location>
        <position position="171"/>
    </location>
</feature>
<feature type="active site" description="Proton donor/acceptor" evidence="1">
    <location>
        <position position="200"/>
    </location>
</feature>
<organism>
    <name type="scientific">Klebsiella pneumoniae subsp. pneumoniae (strain ATCC 700721 / MGH 78578)</name>
    <dbReference type="NCBI Taxonomy" id="272620"/>
    <lineage>
        <taxon>Bacteria</taxon>
        <taxon>Pseudomonadati</taxon>
        <taxon>Pseudomonadota</taxon>
        <taxon>Gammaproteobacteria</taxon>
        <taxon>Enterobacterales</taxon>
        <taxon>Enterobacteriaceae</taxon>
        <taxon>Klebsiella/Raoultella group</taxon>
        <taxon>Klebsiella</taxon>
        <taxon>Klebsiella pneumoniae complex</taxon>
    </lineage>
</organism>
<name>DEOC_KLEP7</name>
<accession>A6T962</accession>
<gene>
    <name evidence="1" type="primary">deoC</name>
    <name type="ordered locus">KPN78578_16720</name>
    <name type="ORF">KPN_01702</name>
</gene>